<proteinExistence type="inferred from homology"/>
<feature type="chain" id="PRO_0000344933" description="Ribonuclease Y">
    <location>
        <begin position="1"/>
        <end position="519"/>
    </location>
</feature>
<feature type="transmembrane region" description="Helical" evidence="1">
    <location>
        <begin position="3"/>
        <end position="23"/>
    </location>
</feature>
<feature type="domain" description="KH" evidence="1">
    <location>
        <begin position="209"/>
        <end position="269"/>
    </location>
</feature>
<feature type="domain" description="HD" evidence="2">
    <location>
        <begin position="335"/>
        <end position="428"/>
    </location>
</feature>
<reference key="1">
    <citation type="submission" date="2007-05" db="EMBL/GenBank/DDBJ databases">
        <title>Complete sequence of chromosome of Staphylococcus aureus subsp. aureus JH9.</title>
        <authorList>
            <consortium name="US DOE Joint Genome Institute"/>
            <person name="Copeland A."/>
            <person name="Lucas S."/>
            <person name="Lapidus A."/>
            <person name="Barry K."/>
            <person name="Detter J.C."/>
            <person name="Glavina del Rio T."/>
            <person name="Hammon N."/>
            <person name="Israni S."/>
            <person name="Pitluck S."/>
            <person name="Chain P."/>
            <person name="Malfatti S."/>
            <person name="Shin M."/>
            <person name="Vergez L."/>
            <person name="Schmutz J."/>
            <person name="Larimer F."/>
            <person name="Land M."/>
            <person name="Hauser L."/>
            <person name="Kyrpides N."/>
            <person name="Kim E."/>
            <person name="Tomasz A."/>
            <person name="Richardson P."/>
        </authorList>
    </citation>
    <scope>NUCLEOTIDE SEQUENCE [LARGE SCALE GENOMIC DNA]</scope>
    <source>
        <strain>JH9</strain>
    </source>
</reference>
<name>RNY_STAA9</name>
<sequence length="519" mass="58560">MNLLSLLLILLGIILGVVGGYVVARNLLLQKQSQARQTAEDIVNQAHKEADNIKKEKLLEAKEENQILREQTEAELRERRSELQRQETRLLQKEENLERKSDLLDKKDEILEQKESKIEEKQQQVDAKESSVQTLIMKHEQELERISGLTQEEAINEQLQRVEEELSQDIAVLVKEKEKEAKEKVDKTAKELLATAVQRLAADHTSESTVSVVNLPNDEMKGRIIGREGRNIRTLETLTGIDLIIDDTPEAVILSGFDPIRREIARTALVNLVSDGRIHPGRIEDMVEKARKEVDYIIREAGEQATFEVNAHNMHPDLVKIVGRLNYRTSYGQNVLKHSIEVAHLASMLAAELGEDETLAKRAGLLHDVGKAIDHEVEGSHVEIGVELAKKYGENETVINAIHSHHGDVEPTSIISILVAAADALSAARPGARKETLENYIRRLERLETLSESYDGVEKAFAIQAGREIRVIVSPEEIDDLKSYRLARDIKNQIEDELQYPGHIKVTVVRETRAVEYAK</sequence>
<gene>
    <name evidence="1" type="primary">rny</name>
    <name type="synonym">cvfA</name>
    <name type="ordered locus">SaurJH9_1346</name>
</gene>
<evidence type="ECO:0000255" key="1">
    <source>
        <dbReference type="HAMAP-Rule" id="MF_00335"/>
    </source>
</evidence>
<evidence type="ECO:0000255" key="2">
    <source>
        <dbReference type="PROSITE-ProRule" id="PRU01175"/>
    </source>
</evidence>
<accession>A5ISH0</accession>
<organism>
    <name type="scientific">Staphylococcus aureus (strain JH9)</name>
    <dbReference type="NCBI Taxonomy" id="359786"/>
    <lineage>
        <taxon>Bacteria</taxon>
        <taxon>Bacillati</taxon>
        <taxon>Bacillota</taxon>
        <taxon>Bacilli</taxon>
        <taxon>Bacillales</taxon>
        <taxon>Staphylococcaceae</taxon>
        <taxon>Staphylococcus</taxon>
    </lineage>
</organism>
<protein>
    <recommendedName>
        <fullName evidence="1">Ribonuclease Y</fullName>
        <shortName evidence="1">RNase Y</shortName>
        <ecNumber evidence="1">3.1.-.-</ecNumber>
    </recommendedName>
    <alternativeName>
        <fullName>Conserved virulence factor A</fullName>
    </alternativeName>
</protein>
<comment type="function">
    <text evidence="1">Endoribonuclease that initiates mRNA decay.</text>
</comment>
<comment type="subcellular location">
    <subcellularLocation>
        <location evidence="1">Cell membrane</location>
        <topology evidence="1">Single-pass membrane protein</topology>
    </subcellularLocation>
</comment>
<comment type="similarity">
    <text evidence="1">Belongs to the RNase Y family.</text>
</comment>
<keyword id="KW-1003">Cell membrane</keyword>
<keyword id="KW-0255">Endonuclease</keyword>
<keyword id="KW-0378">Hydrolase</keyword>
<keyword id="KW-0472">Membrane</keyword>
<keyword id="KW-0540">Nuclease</keyword>
<keyword id="KW-0694">RNA-binding</keyword>
<keyword id="KW-0812">Transmembrane</keyword>
<keyword id="KW-1133">Transmembrane helix</keyword>
<keyword id="KW-0843">Virulence</keyword>
<dbReference type="EC" id="3.1.-.-" evidence="1"/>
<dbReference type="EMBL" id="CP000703">
    <property type="protein sequence ID" value="ABQ49143.1"/>
    <property type="molecule type" value="Genomic_DNA"/>
</dbReference>
<dbReference type="RefSeq" id="WP_001050916.1">
    <property type="nucleotide sequence ID" value="NC_009487.1"/>
</dbReference>
<dbReference type="SMR" id="A5ISH0"/>
<dbReference type="KEGG" id="saj:SaurJH9_1346"/>
<dbReference type="HOGENOM" id="CLU_028328_1_0_9"/>
<dbReference type="GO" id="GO:0005886">
    <property type="term" value="C:plasma membrane"/>
    <property type="evidence" value="ECO:0007669"/>
    <property type="project" value="UniProtKB-SubCell"/>
</dbReference>
<dbReference type="GO" id="GO:0003723">
    <property type="term" value="F:RNA binding"/>
    <property type="evidence" value="ECO:0007669"/>
    <property type="project" value="UniProtKB-UniRule"/>
</dbReference>
<dbReference type="GO" id="GO:0004521">
    <property type="term" value="F:RNA endonuclease activity"/>
    <property type="evidence" value="ECO:0007669"/>
    <property type="project" value="UniProtKB-UniRule"/>
</dbReference>
<dbReference type="GO" id="GO:0006402">
    <property type="term" value="P:mRNA catabolic process"/>
    <property type="evidence" value="ECO:0007669"/>
    <property type="project" value="UniProtKB-UniRule"/>
</dbReference>
<dbReference type="CDD" id="cd00077">
    <property type="entry name" value="HDc"/>
    <property type="match status" value="1"/>
</dbReference>
<dbReference type="CDD" id="cd22431">
    <property type="entry name" value="KH-I_RNaseY"/>
    <property type="match status" value="1"/>
</dbReference>
<dbReference type="FunFam" id="1.10.3210.10:FF:000003">
    <property type="entry name" value="Ribonuclease Y"/>
    <property type="match status" value="1"/>
</dbReference>
<dbReference type="FunFam" id="3.30.1370.10:FF:000006">
    <property type="entry name" value="Ribonuclease Y"/>
    <property type="match status" value="1"/>
</dbReference>
<dbReference type="Gene3D" id="1.10.3210.10">
    <property type="entry name" value="Hypothetical protein af1432"/>
    <property type="match status" value="1"/>
</dbReference>
<dbReference type="Gene3D" id="3.30.1370.10">
    <property type="entry name" value="K Homology domain, type 1"/>
    <property type="match status" value="1"/>
</dbReference>
<dbReference type="HAMAP" id="MF_00335">
    <property type="entry name" value="RNase_Y"/>
    <property type="match status" value="1"/>
</dbReference>
<dbReference type="InterPro" id="IPR003607">
    <property type="entry name" value="HD/PDEase_dom"/>
</dbReference>
<dbReference type="InterPro" id="IPR006674">
    <property type="entry name" value="HD_domain"/>
</dbReference>
<dbReference type="InterPro" id="IPR006675">
    <property type="entry name" value="HDIG_dom"/>
</dbReference>
<dbReference type="InterPro" id="IPR004087">
    <property type="entry name" value="KH_dom"/>
</dbReference>
<dbReference type="InterPro" id="IPR004088">
    <property type="entry name" value="KH_dom_type_1"/>
</dbReference>
<dbReference type="InterPro" id="IPR036612">
    <property type="entry name" value="KH_dom_type_1_sf"/>
</dbReference>
<dbReference type="InterPro" id="IPR017705">
    <property type="entry name" value="Ribonuclease_Y"/>
</dbReference>
<dbReference type="InterPro" id="IPR022711">
    <property type="entry name" value="RNase_Y_N"/>
</dbReference>
<dbReference type="NCBIfam" id="TIGR00277">
    <property type="entry name" value="HDIG"/>
    <property type="match status" value="1"/>
</dbReference>
<dbReference type="NCBIfam" id="TIGR03319">
    <property type="entry name" value="RNase_Y"/>
    <property type="match status" value="1"/>
</dbReference>
<dbReference type="PANTHER" id="PTHR12826">
    <property type="entry name" value="RIBONUCLEASE Y"/>
    <property type="match status" value="1"/>
</dbReference>
<dbReference type="PANTHER" id="PTHR12826:SF15">
    <property type="entry name" value="RIBONUCLEASE Y"/>
    <property type="match status" value="1"/>
</dbReference>
<dbReference type="Pfam" id="PF01966">
    <property type="entry name" value="HD"/>
    <property type="match status" value="1"/>
</dbReference>
<dbReference type="Pfam" id="PF00013">
    <property type="entry name" value="KH_1"/>
    <property type="match status" value="1"/>
</dbReference>
<dbReference type="Pfam" id="PF12072">
    <property type="entry name" value="RNase_Y_N"/>
    <property type="match status" value="1"/>
</dbReference>
<dbReference type="SMART" id="SM00471">
    <property type="entry name" value="HDc"/>
    <property type="match status" value="1"/>
</dbReference>
<dbReference type="SMART" id="SM00322">
    <property type="entry name" value="KH"/>
    <property type="match status" value="1"/>
</dbReference>
<dbReference type="SUPFAM" id="SSF54791">
    <property type="entry name" value="Eukaryotic type KH-domain (KH-domain type I)"/>
    <property type="match status" value="1"/>
</dbReference>
<dbReference type="SUPFAM" id="SSF109604">
    <property type="entry name" value="HD-domain/PDEase-like"/>
    <property type="match status" value="1"/>
</dbReference>
<dbReference type="PROSITE" id="PS51831">
    <property type="entry name" value="HD"/>
    <property type="match status" value="1"/>
</dbReference>
<dbReference type="PROSITE" id="PS50084">
    <property type="entry name" value="KH_TYPE_1"/>
    <property type="match status" value="1"/>
</dbReference>